<proteinExistence type="inferred from homology"/>
<organism>
    <name type="scientific">Acinetobacter baumannii (strain ATCC 17978 / DSM 105126 / CIP 53.77 / LMG 1025 / NCDC KC755 / 5377)</name>
    <dbReference type="NCBI Taxonomy" id="400667"/>
    <lineage>
        <taxon>Bacteria</taxon>
        <taxon>Pseudomonadati</taxon>
        <taxon>Pseudomonadota</taxon>
        <taxon>Gammaproteobacteria</taxon>
        <taxon>Moraxellales</taxon>
        <taxon>Moraxellaceae</taxon>
        <taxon>Acinetobacter</taxon>
        <taxon>Acinetobacter calcoaceticus/baumannii complex</taxon>
    </lineage>
</organism>
<reference key="1">
    <citation type="journal article" date="2007" name="Genes Dev.">
        <title>New insights into Acinetobacter baumannii pathogenesis revealed by high-density pyrosequencing and transposon mutagenesis.</title>
        <authorList>
            <person name="Smith M.G."/>
            <person name="Gianoulis T.A."/>
            <person name="Pukatzki S."/>
            <person name="Mekalanos J.J."/>
            <person name="Ornston L.N."/>
            <person name="Gerstein M."/>
            <person name="Snyder M."/>
        </authorList>
    </citation>
    <scope>NUCLEOTIDE SEQUENCE [LARGE SCALE GENOMIC DNA]</scope>
    <source>
        <strain>ATCC 17978 / DSM 105126 / CIP 53.77 / LMG 1025 / NCDC KC755 / 5377</strain>
    </source>
</reference>
<gene>
    <name evidence="1" type="primary">nuoH</name>
    <name type="ordered locus">A1S_0758</name>
</gene>
<dbReference type="EC" id="7.1.1.-" evidence="1"/>
<dbReference type="EMBL" id="CP000521">
    <property type="protein sequence ID" value="ABO11198.2"/>
    <property type="molecule type" value="Genomic_DNA"/>
</dbReference>
<dbReference type="RefSeq" id="WP_001070989.1">
    <property type="nucleotide sequence ID" value="NZ_CP053098.1"/>
</dbReference>
<dbReference type="SMR" id="A3M2Q4"/>
<dbReference type="GeneID" id="92892688"/>
<dbReference type="KEGG" id="acb:A1S_0758"/>
<dbReference type="HOGENOM" id="CLU_015134_0_1_6"/>
<dbReference type="GO" id="GO:0005886">
    <property type="term" value="C:plasma membrane"/>
    <property type="evidence" value="ECO:0007669"/>
    <property type="project" value="UniProtKB-SubCell"/>
</dbReference>
<dbReference type="GO" id="GO:0003954">
    <property type="term" value="F:NADH dehydrogenase activity"/>
    <property type="evidence" value="ECO:0007669"/>
    <property type="project" value="TreeGrafter"/>
</dbReference>
<dbReference type="GO" id="GO:0016655">
    <property type="term" value="F:oxidoreductase activity, acting on NAD(P)H, quinone or similar compound as acceptor"/>
    <property type="evidence" value="ECO:0007669"/>
    <property type="project" value="UniProtKB-UniRule"/>
</dbReference>
<dbReference type="GO" id="GO:0048038">
    <property type="term" value="F:quinone binding"/>
    <property type="evidence" value="ECO:0007669"/>
    <property type="project" value="UniProtKB-KW"/>
</dbReference>
<dbReference type="GO" id="GO:0009060">
    <property type="term" value="P:aerobic respiration"/>
    <property type="evidence" value="ECO:0007669"/>
    <property type="project" value="TreeGrafter"/>
</dbReference>
<dbReference type="HAMAP" id="MF_01350">
    <property type="entry name" value="NDH1_NuoH"/>
    <property type="match status" value="1"/>
</dbReference>
<dbReference type="InterPro" id="IPR001694">
    <property type="entry name" value="NADH_UbQ_OxRdtase_su1/FPO"/>
</dbReference>
<dbReference type="InterPro" id="IPR018086">
    <property type="entry name" value="NADH_UbQ_OxRdtase_su1_CS"/>
</dbReference>
<dbReference type="NCBIfam" id="NF004740">
    <property type="entry name" value="PRK06076.1-1"/>
    <property type="match status" value="1"/>
</dbReference>
<dbReference type="NCBIfam" id="NF004741">
    <property type="entry name" value="PRK06076.1-2"/>
    <property type="match status" value="1"/>
</dbReference>
<dbReference type="PANTHER" id="PTHR11432">
    <property type="entry name" value="NADH DEHYDROGENASE SUBUNIT 1"/>
    <property type="match status" value="1"/>
</dbReference>
<dbReference type="PANTHER" id="PTHR11432:SF3">
    <property type="entry name" value="NADH-UBIQUINONE OXIDOREDUCTASE CHAIN 1"/>
    <property type="match status" value="1"/>
</dbReference>
<dbReference type="Pfam" id="PF00146">
    <property type="entry name" value="NADHdh"/>
    <property type="match status" value="1"/>
</dbReference>
<dbReference type="PROSITE" id="PS00667">
    <property type="entry name" value="COMPLEX1_ND1_1"/>
    <property type="match status" value="1"/>
</dbReference>
<dbReference type="PROSITE" id="PS00668">
    <property type="entry name" value="COMPLEX1_ND1_2"/>
    <property type="match status" value="1"/>
</dbReference>
<comment type="function">
    <text evidence="1">NDH-1 shuttles electrons from NADH, via FMN and iron-sulfur (Fe-S) centers, to quinones in the respiratory chain. The immediate electron acceptor for the enzyme in this species is believed to be ubiquinone. Couples the redox reaction to proton translocation (for every two electrons transferred, four hydrogen ions are translocated across the cytoplasmic membrane), and thus conserves the redox energy in a proton gradient. This subunit may bind ubiquinone.</text>
</comment>
<comment type="catalytic activity">
    <reaction evidence="1">
        <text>a quinone + NADH + 5 H(+)(in) = a quinol + NAD(+) + 4 H(+)(out)</text>
        <dbReference type="Rhea" id="RHEA:57888"/>
        <dbReference type="ChEBI" id="CHEBI:15378"/>
        <dbReference type="ChEBI" id="CHEBI:24646"/>
        <dbReference type="ChEBI" id="CHEBI:57540"/>
        <dbReference type="ChEBI" id="CHEBI:57945"/>
        <dbReference type="ChEBI" id="CHEBI:132124"/>
    </reaction>
</comment>
<comment type="subunit">
    <text evidence="1">NDH-1 is composed of 14 different subunits. Subunits NuoA, H, J, K, L, M, N constitute the membrane sector of the complex.</text>
</comment>
<comment type="subcellular location">
    <subcellularLocation>
        <location evidence="1">Cell inner membrane</location>
        <topology evidence="1">Multi-pass membrane protein</topology>
    </subcellularLocation>
</comment>
<comment type="similarity">
    <text evidence="1">Belongs to the complex I subunit 1 family.</text>
</comment>
<name>NUOH_ACIBT</name>
<accession>A3M2Q4</accession>
<evidence type="ECO:0000255" key="1">
    <source>
        <dbReference type="HAMAP-Rule" id="MF_01350"/>
    </source>
</evidence>
<keyword id="KW-0997">Cell inner membrane</keyword>
<keyword id="KW-1003">Cell membrane</keyword>
<keyword id="KW-0472">Membrane</keyword>
<keyword id="KW-0520">NAD</keyword>
<keyword id="KW-0874">Quinone</keyword>
<keyword id="KW-1278">Translocase</keyword>
<keyword id="KW-0812">Transmembrane</keyword>
<keyword id="KW-1133">Transmembrane helix</keyword>
<keyword id="KW-0830">Ubiquinone</keyword>
<sequence>MNQEIIRQTPLWAENWPIAYAVVQAVVILLVVVLVAALMSFIERRLLAWWQDRYGPNRVGPGGMFQIVADMLKIMFKEDWTPKFADKLTFRLAPAVAMATAVLSFMVIPVSPALGVADMSIGLLFFMAMAGIAVYAVLFGGWSSNNKYSLLGGLRSAAQTISYEVFLGISLMGVVAIAGSFNLREIVEAQRDVWFIIPQFLGFLIFVVAGVAVTHRHPFDQPEAEQELAEGYHVEYGGMKWGMFFVAEYVNVVLISALIVTLFFGGWLAPFNLEIPFVPPVFWFVIKTAFFVMMFVLARGSLMRPRYDQVMNFGWKICLPLALVNLLVTGAVILMNQA</sequence>
<protein>
    <recommendedName>
        <fullName evidence="1">NADH-quinone oxidoreductase subunit H</fullName>
        <ecNumber evidence="1">7.1.1.-</ecNumber>
    </recommendedName>
    <alternativeName>
        <fullName evidence="1">NADH dehydrogenase I subunit H</fullName>
    </alternativeName>
    <alternativeName>
        <fullName evidence="1">NDH-1 subunit H</fullName>
    </alternativeName>
</protein>
<feature type="chain" id="PRO_0000299932" description="NADH-quinone oxidoreductase subunit H">
    <location>
        <begin position="1"/>
        <end position="338"/>
    </location>
</feature>
<feature type="transmembrane region" description="Helical" evidence="1">
    <location>
        <begin position="22"/>
        <end position="42"/>
    </location>
</feature>
<feature type="transmembrane region" description="Helical" evidence="1">
    <location>
        <begin position="96"/>
        <end position="116"/>
    </location>
</feature>
<feature type="transmembrane region" description="Helical" evidence="1">
    <location>
        <begin position="121"/>
        <end position="141"/>
    </location>
</feature>
<feature type="transmembrane region" description="Helical" evidence="1">
    <location>
        <begin position="161"/>
        <end position="181"/>
    </location>
</feature>
<feature type="transmembrane region" description="Helical" evidence="1">
    <location>
        <begin position="193"/>
        <end position="213"/>
    </location>
</feature>
<feature type="transmembrane region" description="Helical" evidence="1">
    <location>
        <begin position="249"/>
        <end position="269"/>
    </location>
</feature>
<feature type="transmembrane region" description="Helical" evidence="1">
    <location>
        <begin position="277"/>
        <end position="297"/>
    </location>
</feature>
<feature type="transmembrane region" description="Helical" evidence="1">
    <location>
        <begin position="315"/>
        <end position="335"/>
    </location>
</feature>